<accession>B9DYC1</accession>
<protein>
    <recommendedName>
        <fullName evidence="1">Large ribosomal subunit protein uL5</fullName>
    </recommendedName>
    <alternativeName>
        <fullName evidence="2">50S ribosomal protein L5</fullName>
    </alternativeName>
</protein>
<organism>
    <name type="scientific">Clostridium kluyveri (strain NBRC 12016)</name>
    <dbReference type="NCBI Taxonomy" id="583346"/>
    <lineage>
        <taxon>Bacteria</taxon>
        <taxon>Bacillati</taxon>
        <taxon>Bacillota</taxon>
        <taxon>Clostridia</taxon>
        <taxon>Eubacteriales</taxon>
        <taxon>Clostridiaceae</taxon>
        <taxon>Clostridium</taxon>
    </lineage>
</organism>
<keyword id="KW-0687">Ribonucleoprotein</keyword>
<keyword id="KW-0689">Ribosomal protein</keyword>
<keyword id="KW-0694">RNA-binding</keyword>
<keyword id="KW-0699">rRNA-binding</keyword>
<keyword id="KW-0820">tRNA-binding</keyword>
<dbReference type="EMBL" id="AP009049">
    <property type="protein sequence ID" value="BAH05246.1"/>
    <property type="molecule type" value="Genomic_DNA"/>
</dbReference>
<dbReference type="RefSeq" id="WP_011988815.1">
    <property type="nucleotide sequence ID" value="NC_011837.1"/>
</dbReference>
<dbReference type="SMR" id="B9DYC1"/>
<dbReference type="KEGG" id="ckr:CKR_0195"/>
<dbReference type="HOGENOM" id="CLU_061015_2_1_9"/>
<dbReference type="Proteomes" id="UP000007969">
    <property type="component" value="Chromosome"/>
</dbReference>
<dbReference type="GO" id="GO:1990904">
    <property type="term" value="C:ribonucleoprotein complex"/>
    <property type="evidence" value="ECO:0007669"/>
    <property type="project" value="UniProtKB-KW"/>
</dbReference>
<dbReference type="GO" id="GO:0005840">
    <property type="term" value="C:ribosome"/>
    <property type="evidence" value="ECO:0007669"/>
    <property type="project" value="UniProtKB-KW"/>
</dbReference>
<dbReference type="GO" id="GO:0019843">
    <property type="term" value="F:rRNA binding"/>
    <property type="evidence" value="ECO:0007669"/>
    <property type="project" value="UniProtKB-UniRule"/>
</dbReference>
<dbReference type="GO" id="GO:0003735">
    <property type="term" value="F:structural constituent of ribosome"/>
    <property type="evidence" value="ECO:0007669"/>
    <property type="project" value="InterPro"/>
</dbReference>
<dbReference type="GO" id="GO:0000049">
    <property type="term" value="F:tRNA binding"/>
    <property type="evidence" value="ECO:0007669"/>
    <property type="project" value="UniProtKB-UniRule"/>
</dbReference>
<dbReference type="GO" id="GO:0006412">
    <property type="term" value="P:translation"/>
    <property type="evidence" value="ECO:0007669"/>
    <property type="project" value="UniProtKB-UniRule"/>
</dbReference>
<dbReference type="FunFam" id="3.30.1440.10:FF:000001">
    <property type="entry name" value="50S ribosomal protein L5"/>
    <property type="match status" value="1"/>
</dbReference>
<dbReference type="Gene3D" id="3.30.1440.10">
    <property type="match status" value="1"/>
</dbReference>
<dbReference type="HAMAP" id="MF_01333_B">
    <property type="entry name" value="Ribosomal_uL5_B"/>
    <property type="match status" value="1"/>
</dbReference>
<dbReference type="InterPro" id="IPR002132">
    <property type="entry name" value="Ribosomal_uL5"/>
</dbReference>
<dbReference type="InterPro" id="IPR020930">
    <property type="entry name" value="Ribosomal_uL5_bac-type"/>
</dbReference>
<dbReference type="InterPro" id="IPR031309">
    <property type="entry name" value="Ribosomal_uL5_C"/>
</dbReference>
<dbReference type="InterPro" id="IPR020929">
    <property type="entry name" value="Ribosomal_uL5_CS"/>
</dbReference>
<dbReference type="InterPro" id="IPR022803">
    <property type="entry name" value="Ribosomal_uL5_dom_sf"/>
</dbReference>
<dbReference type="InterPro" id="IPR031310">
    <property type="entry name" value="Ribosomal_uL5_N"/>
</dbReference>
<dbReference type="NCBIfam" id="NF000585">
    <property type="entry name" value="PRK00010.1"/>
    <property type="match status" value="1"/>
</dbReference>
<dbReference type="PANTHER" id="PTHR11994">
    <property type="entry name" value="60S RIBOSOMAL PROTEIN L11-RELATED"/>
    <property type="match status" value="1"/>
</dbReference>
<dbReference type="Pfam" id="PF00281">
    <property type="entry name" value="Ribosomal_L5"/>
    <property type="match status" value="1"/>
</dbReference>
<dbReference type="Pfam" id="PF00673">
    <property type="entry name" value="Ribosomal_L5_C"/>
    <property type="match status" value="1"/>
</dbReference>
<dbReference type="PIRSF" id="PIRSF002161">
    <property type="entry name" value="Ribosomal_L5"/>
    <property type="match status" value="1"/>
</dbReference>
<dbReference type="SUPFAM" id="SSF55282">
    <property type="entry name" value="RL5-like"/>
    <property type="match status" value="1"/>
</dbReference>
<dbReference type="PROSITE" id="PS00358">
    <property type="entry name" value="RIBOSOMAL_L5"/>
    <property type="match status" value="1"/>
</dbReference>
<sequence length="181" mass="20606">MSLRLQEKYEKEVVPALMDKFGYKNIMQAPKLEKIVINMGVGEAKDNPKVLESAVNDLTIITGQKPVLTRAKKSIANFKLRENMAIGCKVTLRKQYMYEFADKLMNVALPRVRDFSGVSDKSFDGRGNYSLGIKEQLIFPEIEYDKIDKVRGMDIVFVTTANTDEEAKELLRLFGMPFAQK</sequence>
<evidence type="ECO:0000255" key="1">
    <source>
        <dbReference type="HAMAP-Rule" id="MF_01333"/>
    </source>
</evidence>
<evidence type="ECO:0000305" key="2"/>
<gene>
    <name evidence="1" type="primary">rplE</name>
    <name type="ordered locus">CKR_0195</name>
</gene>
<comment type="function">
    <text evidence="1">This is one of the proteins that bind and probably mediate the attachment of the 5S RNA into the large ribosomal subunit, where it forms part of the central protuberance. In the 70S ribosome it contacts protein S13 of the 30S subunit (bridge B1b), connecting the 2 subunits; this bridge is implicated in subunit movement. Contacts the P site tRNA; the 5S rRNA and some of its associated proteins might help stabilize positioning of ribosome-bound tRNAs.</text>
</comment>
<comment type="subunit">
    <text evidence="1">Part of the 50S ribosomal subunit; part of the 5S rRNA/L5/L18/L25 subcomplex. Contacts the 5S rRNA and the P site tRNA. Forms a bridge to the 30S subunit in the 70S ribosome.</text>
</comment>
<comment type="similarity">
    <text evidence="1">Belongs to the universal ribosomal protein uL5 family.</text>
</comment>
<proteinExistence type="inferred from homology"/>
<feature type="chain" id="PRO_1000166125" description="Large ribosomal subunit protein uL5">
    <location>
        <begin position="1"/>
        <end position="181"/>
    </location>
</feature>
<reference key="1">
    <citation type="submission" date="2005-09" db="EMBL/GenBank/DDBJ databases">
        <title>Complete genome sequence of Clostridium kluyveri and comparative genomics of Clostridia species.</title>
        <authorList>
            <person name="Inui M."/>
            <person name="Nonaka H."/>
            <person name="Shinoda Y."/>
            <person name="Ikenaga Y."/>
            <person name="Abe M."/>
            <person name="Naito K."/>
            <person name="Vertes A.A."/>
            <person name="Yukawa H."/>
        </authorList>
    </citation>
    <scope>NUCLEOTIDE SEQUENCE [LARGE SCALE GENOMIC DNA]</scope>
    <source>
        <strain>NBRC 12016</strain>
    </source>
</reference>
<name>RL5_CLOK1</name>